<name>MAZF1_MYCTU</name>
<proteinExistence type="inferred from homology"/>
<keyword id="KW-0255">Endonuclease</keyword>
<keyword id="KW-0378">Hydrolase</keyword>
<keyword id="KW-0540">Nuclease</keyword>
<keyword id="KW-1185">Reference proteome</keyword>
<keyword id="KW-1277">Toxin-antitoxin system</keyword>
<feature type="chain" id="PRO_0000406304" description="Probable endoribonuclease MazF1">
    <location>
        <begin position="1"/>
        <end position="93"/>
    </location>
</feature>
<comment type="function">
    <text evidence="1 3">Toxic component of a type II toxin-antitoxin (TA) system, its cognate antitoxin is MazE1 (Probable). Probably an endoribonuclease (By similarity).</text>
</comment>
<comment type="subunit">
    <text evidence="1">Forms a complex with cognate antitoxin MazE1.</text>
</comment>
<comment type="similarity">
    <text evidence="3">Belongs to the PemK/MazF family.</text>
</comment>
<protein>
    <recommendedName>
        <fullName evidence="3">Probable endoribonuclease MazF1</fullName>
        <ecNumber>3.1.-.-</ecNumber>
    </recommendedName>
    <alternativeName>
        <fullName>Probable toxin MazF1</fullName>
    </alternativeName>
</protein>
<sequence length="93" mass="9925">MLRGEIWQVDLDPARGSAANMRRPAVIVSNDRANAAAIRLDRGVVPVVPVTSNTEKVPIPGVVAGSERWPGRRFEGAGPAGWIRRCATSPLPS</sequence>
<gene>
    <name type="primary">mazF1</name>
    <name evidence="2" type="synonym">mazF-mt2</name>
    <name type="ordered locus">Rv0456A</name>
</gene>
<reference key="1">
    <citation type="journal article" date="1998" name="Nature">
        <title>Deciphering the biology of Mycobacterium tuberculosis from the complete genome sequence.</title>
        <authorList>
            <person name="Cole S.T."/>
            <person name="Brosch R."/>
            <person name="Parkhill J."/>
            <person name="Garnier T."/>
            <person name="Churcher C.M."/>
            <person name="Harris D.E."/>
            <person name="Gordon S.V."/>
            <person name="Eiglmeier K."/>
            <person name="Gas S."/>
            <person name="Barry C.E. III"/>
            <person name="Tekaia F."/>
            <person name="Badcock K."/>
            <person name="Basham D."/>
            <person name="Brown D."/>
            <person name="Chillingworth T."/>
            <person name="Connor R."/>
            <person name="Davies R.M."/>
            <person name="Devlin K."/>
            <person name="Feltwell T."/>
            <person name="Gentles S."/>
            <person name="Hamlin N."/>
            <person name="Holroyd S."/>
            <person name="Hornsby T."/>
            <person name="Jagels K."/>
            <person name="Krogh A."/>
            <person name="McLean J."/>
            <person name="Moule S."/>
            <person name="Murphy L.D."/>
            <person name="Oliver S."/>
            <person name="Osborne J."/>
            <person name="Quail M.A."/>
            <person name="Rajandream M.A."/>
            <person name="Rogers J."/>
            <person name="Rutter S."/>
            <person name="Seeger K."/>
            <person name="Skelton S."/>
            <person name="Squares S."/>
            <person name="Squares R."/>
            <person name="Sulston J.E."/>
            <person name="Taylor K."/>
            <person name="Whitehead S."/>
            <person name="Barrell B.G."/>
        </authorList>
    </citation>
    <scope>NUCLEOTIDE SEQUENCE [LARGE SCALE GENOMIC DNA]</scope>
    <source>
        <strain>ATCC 25618 / H37Rv</strain>
    </source>
</reference>
<reference key="2">
    <citation type="journal article" date="2005" name="Nucleic Acids Res.">
        <title>Toxin-antitoxin loci are highly abundant in free-living but lost from host-associated prokaryotes.</title>
        <authorList>
            <person name="Pandey D.P."/>
            <person name="Gerdes K."/>
        </authorList>
    </citation>
    <scope>IDENTIFICATION</scope>
    <scope>POSSIBLE FUNCTION</scope>
    <source>
        <strain>ATCC 25618 / H37Rv</strain>
    </source>
</reference>
<reference key="3">
    <citation type="journal article" date="2006" name="J. Biol. Chem.">
        <title>Characterization of mRNA interferases from Mycobacterium tuberculosis.</title>
        <authorList>
            <person name="Zhu L."/>
            <person name="Zhang Y."/>
            <person name="Teh J.S."/>
            <person name="Zhang J."/>
            <person name="Connell N."/>
            <person name="Rubin H."/>
            <person name="Inouye M."/>
        </authorList>
    </citation>
    <scope>GENE NAME</scope>
    <scope>POSSIBLE FUNCTION</scope>
    <source>
        <strain>ATCC 25618 / H37Rv</strain>
    </source>
</reference>
<dbReference type="EC" id="3.1.-.-"/>
<dbReference type="EMBL" id="AL123456">
    <property type="protein sequence ID" value="CCP43188.1"/>
    <property type="molecule type" value="Genomic_DNA"/>
</dbReference>
<dbReference type="RefSeq" id="WP_003402288.1">
    <property type="nucleotide sequence ID" value="NC_000962.3"/>
</dbReference>
<dbReference type="RefSeq" id="YP_177621.1">
    <property type="nucleotide sequence ID" value="NC_000962.3"/>
</dbReference>
<dbReference type="SMR" id="Q6MX40"/>
<dbReference type="STRING" id="83332.Rv0456A"/>
<dbReference type="PaxDb" id="83332-Rv0456A"/>
<dbReference type="GeneID" id="3205039"/>
<dbReference type="KEGG" id="mtu:Rv0456A"/>
<dbReference type="KEGG" id="mtv:RVBD_0456A"/>
<dbReference type="TubercuList" id="Rv0456A"/>
<dbReference type="eggNOG" id="COG2337">
    <property type="taxonomic scope" value="Bacteria"/>
</dbReference>
<dbReference type="InParanoid" id="Q6MX40"/>
<dbReference type="OrthoDB" id="9808744at2"/>
<dbReference type="PhylomeDB" id="Q6MX40"/>
<dbReference type="Proteomes" id="UP000001584">
    <property type="component" value="Chromosome"/>
</dbReference>
<dbReference type="GO" id="GO:0003677">
    <property type="term" value="F:DNA binding"/>
    <property type="evidence" value="ECO:0007669"/>
    <property type="project" value="InterPro"/>
</dbReference>
<dbReference type="GO" id="GO:0004521">
    <property type="term" value="F:RNA endonuclease activity"/>
    <property type="evidence" value="ECO:0000318"/>
    <property type="project" value="GO_Central"/>
</dbReference>
<dbReference type="GO" id="GO:0006402">
    <property type="term" value="P:mRNA catabolic process"/>
    <property type="evidence" value="ECO:0000318"/>
    <property type="project" value="GO_Central"/>
</dbReference>
<dbReference type="GO" id="GO:0016075">
    <property type="term" value="P:rRNA catabolic process"/>
    <property type="evidence" value="ECO:0000318"/>
    <property type="project" value="GO_Central"/>
</dbReference>
<dbReference type="Gene3D" id="2.30.30.110">
    <property type="match status" value="1"/>
</dbReference>
<dbReference type="InterPro" id="IPR003477">
    <property type="entry name" value="PemK-like"/>
</dbReference>
<dbReference type="InterPro" id="IPR011067">
    <property type="entry name" value="Plasmid_toxin/cell-grow_inhib"/>
</dbReference>
<dbReference type="PANTHER" id="PTHR33988">
    <property type="entry name" value="ENDORIBONUCLEASE MAZF-RELATED"/>
    <property type="match status" value="1"/>
</dbReference>
<dbReference type="PANTHER" id="PTHR33988:SF1">
    <property type="entry name" value="ENDORIBONUCLEASE MAZF7-RELATED"/>
    <property type="match status" value="1"/>
</dbReference>
<dbReference type="Pfam" id="PF02452">
    <property type="entry name" value="PemK_toxin"/>
    <property type="match status" value="1"/>
</dbReference>
<dbReference type="SUPFAM" id="SSF50118">
    <property type="entry name" value="Cell growth inhibitor/plasmid maintenance toxic component"/>
    <property type="match status" value="1"/>
</dbReference>
<accession>Q6MX40</accession>
<accession>L0T6I7</accession>
<organism>
    <name type="scientific">Mycobacterium tuberculosis (strain ATCC 25618 / H37Rv)</name>
    <dbReference type="NCBI Taxonomy" id="83332"/>
    <lineage>
        <taxon>Bacteria</taxon>
        <taxon>Bacillati</taxon>
        <taxon>Actinomycetota</taxon>
        <taxon>Actinomycetes</taxon>
        <taxon>Mycobacteriales</taxon>
        <taxon>Mycobacteriaceae</taxon>
        <taxon>Mycobacterium</taxon>
        <taxon>Mycobacterium tuberculosis complex</taxon>
    </lineage>
</organism>
<evidence type="ECO:0000250" key="1">
    <source>
        <dbReference type="UniProtKB" id="P9WIH9"/>
    </source>
</evidence>
<evidence type="ECO:0000303" key="2">
    <source>
    </source>
</evidence>
<evidence type="ECO:0000305" key="3"/>